<feature type="chain" id="PRO_1000063121" description="Imidazole glycerol phosphate synthase subunit HisF">
    <location>
        <begin position="1"/>
        <end position="256"/>
    </location>
</feature>
<feature type="active site" evidence="1">
    <location>
        <position position="12"/>
    </location>
</feature>
<feature type="active site" evidence="1">
    <location>
        <position position="131"/>
    </location>
</feature>
<evidence type="ECO:0000255" key="1">
    <source>
        <dbReference type="HAMAP-Rule" id="MF_01013"/>
    </source>
</evidence>
<protein>
    <recommendedName>
        <fullName evidence="1">Imidazole glycerol phosphate synthase subunit HisF</fullName>
        <ecNumber evidence="1">4.3.2.10</ecNumber>
    </recommendedName>
    <alternativeName>
        <fullName evidence="1">IGP synthase cyclase subunit</fullName>
    </alternativeName>
    <alternativeName>
        <fullName evidence="1">IGP synthase subunit HisF</fullName>
    </alternativeName>
    <alternativeName>
        <fullName evidence="1">ImGP synthase subunit HisF</fullName>
        <shortName evidence="1">IGPS subunit HisF</shortName>
    </alternativeName>
</protein>
<gene>
    <name evidence="1" type="primary">hisF</name>
    <name type="ordered locus">Pput_0313</name>
</gene>
<name>HIS6_PSEP1</name>
<proteinExistence type="inferred from homology"/>
<comment type="function">
    <text evidence="1">IGPS catalyzes the conversion of PRFAR and glutamine to IGP, AICAR and glutamate. The HisF subunit catalyzes the cyclization activity that produces IGP and AICAR from PRFAR using the ammonia provided by the HisH subunit.</text>
</comment>
<comment type="catalytic activity">
    <reaction evidence="1">
        <text>5-[(5-phospho-1-deoxy-D-ribulos-1-ylimino)methylamino]-1-(5-phospho-beta-D-ribosyl)imidazole-4-carboxamide + L-glutamine = D-erythro-1-(imidazol-4-yl)glycerol 3-phosphate + 5-amino-1-(5-phospho-beta-D-ribosyl)imidazole-4-carboxamide + L-glutamate + H(+)</text>
        <dbReference type="Rhea" id="RHEA:24793"/>
        <dbReference type="ChEBI" id="CHEBI:15378"/>
        <dbReference type="ChEBI" id="CHEBI:29985"/>
        <dbReference type="ChEBI" id="CHEBI:58278"/>
        <dbReference type="ChEBI" id="CHEBI:58359"/>
        <dbReference type="ChEBI" id="CHEBI:58475"/>
        <dbReference type="ChEBI" id="CHEBI:58525"/>
        <dbReference type="EC" id="4.3.2.10"/>
    </reaction>
</comment>
<comment type="pathway">
    <text evidence="1">Amino-acid biosynthesis; L-histidine biosynthesis; L-histidine from 5-phospho-alpha-D-ribose 1-diphosphate: step 5/9.</text>
</comment>
<comment type="subunit">
    <text evidence="1">Heterodimer of HisH and HisF.</text>
</comment>
<comment type="subcellular location">
    <subcellularLocation>
        <location evidence="1">Cytoplasm</location>
    </subcellularLocation>
</comment>
<comment type="similarity">
    <text evidence="1">Belongs to the HisA/HisF family.</text>
</comment>
<dbReference type="EC" id="4.3.2.10" evidence="1"/>
<dbReference type="EMBL" id="CP000712">
    <property type="protein sequence ID" value="ABQ76486.1"/>
    <property type="molecule type" value="Genomic_DNA"/>
</dbReference>
<dbReference type="SMR" id="A5VX76"/>
<dbReference type="KEGG" id="ppf:Pput_0313"/>
<dbReference type="eggNOG" id="COG0107">
    <property type="taxonomic scope" value="Bacteria"/>
</dbReference>
<dbReference type="HOGENOM" id="CLU_048577_4_0_6"/>
<dbReference type="UniPathway" id="UPA00031">
    <property type="reaction ID" value="UER00010"/>
</dbReference>
<dbReference type="GO" id="GO:0005737">
    <property type="term" value="C:cytoplasm"/>
    <property type="evidence" value="ECO:0007669"/>
    <property type="project" value="UniProtKB-SubCell"/>
</dbReference>
<dbReference type="GO" id="GO:0000107">
    <property type="term" value="F:imidazoleglycerol-phosphate synthase activity"/>
    <property type="evidence" value="ECO:0007669"/>
    <property type="project" value="UniProtKB-UniRule"/>
</dbReference>
<dbReference type="GO" id="GO:0016829">
    <property type="term" value="F:lyase activity"/>
    <property type="evidence" value="ECO:0007669"/>
    <property type="project" value="UniProtKB-KW"/>
</dbReference>
<dbReference type="GO" id="GO:0000105">
    <property type="term" value="P:L-histidine biosynthetic process"/>
    <property type="evidence" value="ECO:0007669"/>
    <property type="project" value="UniProtKB-UniRule"/>
</dbReference>
<dbReference type="CDD" id="cd04731">
    <property type="entry name" value="HisF"/>
    <property type="match status" value="1"/>
</dbReference>
<dbReference type="FunFam" id="3.20.20.70:FF:000006">
    <property type="entry name" value="Imidazole glycerol phosphate synthase subunit HisF"/>
    <property type="match status" value="1"/>
</dbReference>
<dbReference type="Gene3D" id="3.20.20.70">
    <property type="entry name" value="Aldolase class I"/>
    <property type="match status" value="1"/>
</dbReference>
<dbReference type="HAMAP" id="MF_01013">
    <property type="entry name" value="HisF"/>
    <property type="match status" value="1"/>
</dbReference>
<dbReference type="InterPro" id="IPR013785">
    <property type="entry name" value="Aldolase_TIM"/>
</dbReference>
<dbReference type="InterPro" id="IPR006062">
    <property type="entry name" value="His_biosynth"/>
</dbReference>
<dbReference type="InterPro" id="IPR004651">
    <property type="entry name" value="HisF"/>
</dbReference>
<dbReference type="InterPro" id="IPR050064">
    <property type="entry name" value="IGPS_HisA/HisF"/>
</dbReference>
<dbReference type="InterPro" id="IPR011060">
    <property type="entry name" value="RibuloseP-bd_barrel"/>
</dbReference>
<dbReference type="NCBIfam" id="TIGR00735">
    <property type="entry name" value="hisF"/>
    <property type="match status" value="1"/>
</dbReference>
<dbReference type="PANTHER" id="PTHR21235:SF2">
    <property type="entry name" value="IMIDAZOLE GLYCEROL PHOSPHATE SYNTHASE HISHF"/>
    <property type="match status" value="1"/>
</dbReference>
<dbReference type="PANTHER" id="PTHR21235">
    <property type="entry name" value="IMIDAZOLE GLYCEROL PHOSPHATE SYNTHASE SUBUNIT HISF/H IGP SYNTHASE SUBUNIT HISF/H"/>
    <property type="match status" value="1"/>
</dbReference>
<dbReference type="Pfam" id="PF00977">
    <property type="entry name" value="His_biosynth"/>
    <property type="match status" value="1"/>
</dbReference>
<dbReference type="SUPFAM" id="SSF51366">
    <property type="entry name" value="Ribulose-phoshate binding barrel"/>
    <property type="match status" value="1"/>
</dbReference>
<reference key="1">
    <citation type="submission" date="2007-05" db="EMBL/GenBank/DDBJ databases">
        <title>Complete sequence of Pseudomonas putida F1.</title>
        <authorList>
            <consortium name="US DOE Joint Genome Institute"/>
            <person name="Copeland A."/>
            <person name="Lucas S."/>
            <person name="Lapidus A."/>
            <person name="Barry K."/>
            <person name="Detter J.C."/>
            <person name="Glavina del Rio T."/>
            <person name="Hammon N."/>
            <person name="Israni S."/>
            <person name="Dalin E."/>
            <person name="Tice H."/>
            <person name="Pitluck S."/>
            <person name="Chain P."/>
            <person name="Malfatti S."/>
            <person name="Shin M."/>
            <person name="Vergez L."/>
            <person name="Schmutz J."/>
            <person name="Larimer F."/>
            <person name="Land M."/>
            <person name="Hauser L."/>
            <person name="Kyrpides N."/>
            <person name="Lykidis A."/>
            <person name="Parales R."/>
            <person name="Richardson P."/>
        </authorList>
    </citation>
    <scope>NUCLEOTIDE SEQUENCE [LARGE SCALE GENOMIC DNA]</scope>
    <source>
        <strain>ATCC 700007 / DSM 6899 / JCM 31910 / BCRC 17059 / LMG 24140 / F1</strain>
    </source>
</reference>
<keyword id="KW-0028">Amino-acid biosynthesis</keyword>
<keyword id="KW-0963">Cytoplasm</keyword>
<keyword id="KW-0368">Histidine biosynthesis</keyword>
<keyword id="KW-0456">Lyase</keyword>
<sequence length="256" mass="27131">MALAKRIIPCLDVDNGRVVKGVKFENIRDAGDPVEIARRYDEQGADEITFLDITASVDGRDTTLHTVERMASQVFIPLTVGGGVRTVQDIRNLLNAGADKVSINTAAVFNPEFVGEAADRFGSQCIVVAIDAKKVSGPGEAPRWEIFTHGGRKPTGLDAVEWAKKMEGLGAGEILLTSMDQDGMKNGFDLGVTRAISDALGIPVIASGGVGNLQHLADGILEGHASAVLAASIFHFGEYTVPEAKAYMASRGIVVR</sequence>
<organism>
    <name type="scientific">Pseudomonas putida (strain ATCC 700007 / DSM 6899 / JCM 31910 / BCRC 17059 / LMG 24140 / F1)</name>
    <dbReference type="NCBI Taxonomy" id="351746"/>
    <lineage>
        <taxon>Bacteria</taxon>
        <taxon>Pseudomonadati</taxon>
        <taxon>Pseudomonadota</taxon>
        <taxon>Gammaproteobacteria</taxon>
        <taxon>Pseudomonadales</taxon>
        <taxon>Pseudomonadaceae</taxon>
        <taxon>Pseudomonas</taxon>
    </lineage>
</organism>
<accession>A5VX76</accession>